<proteinExistence type="inferred from homology"/>
<reference key="1">
    <citation type="journal article" date="2004" name="Proc. Natl. Acad. Sci. U.S.A.">
        <title>Genomic analysis of Bacteroides fragilis reveals extensive DNA inversions regulating cell surface adaptation.</title>
        <authorList>
            <person name="Kuwahara T."/>
            <person name="Yamashita A."/>
            <person name="Hirakawa H."/>
            <person name="Nakayama H."/>
            <person name="Toh H."/>
            <person name="Okada N."/>
            <person name="Kuhara S."/>
            <person name="Hattori M."/>
            <person name="Hayashi T."/>
            <person name="Ohnishi Y."/>
        </authorList>
    </citation>
    <scope>NUCLEOTIDE SEQUENCE [LARGE SCALE GENOMIC DNA]</scope>
    <source>
        <strain>YCH46</strain>
    </source>
</reference>
<evidence type="ECO:0000255" key="1">
    <source>
        <dbReference type="HAMAP-Rule" id="MF_00580"/>
    </source>
</evidence>
<gene>
    <name evidence="1" type="primary">groES</name>
    <name evidence="1" type="synonym">groS</name>
    <name type="ordered locus">BF3396</name>
</gene>
<organism>
    <name type="scientific">Bacteroides fragilis (strain YCH46)</name>
    <dbReference type="NCBI Taxonomy" id="295405"/>
    <lineage>
        <taxon>Bacteria</taxon>
        <taxon>Pseudomonadati</taxon>
        <taxon>Bacteroidota</taxon>
        <taxon>Bacteroidia</taxon>
        <taxon>Bacteroidales</taxon>
        <taxon>Bacteroidaceae</taxon>
        <taxon>Bacteroides</taxon>
    </lineage>
</organism>
<comment type="function">
    <text evidence="1">Together with the chaperonin GroEL, plays an essential role in assisting protein folding. The GroEL-GroES system forms a nano-cage that allows encapsulation of the non-native substrate proteins and provides a physical environment optimized to promote and accelerate protein folding. GroES binds to the apical surface of the GroEL ring, thereby capping the opening of the GroEL channel.</text>
</comment>
<comment type="subunit">
    <text evidence="1">Heptamer of 7 subunits arranged in a ring. Interacts with the chaperonin GroEL.</text>
</comment>
<comment type="subcellular location">
    <subcellularLocation>
        <location evidence="1">Cytoplasm</location>
    </subcellularLocation>
</comment>
<comment type="similarity">
    <text evidence="1">Belongs to the GroES chaperonin family.</text>
</comment>
<protein>
    <recommendedName>
        <fullName evidence="1">Co-chaperonin GroES</fullName>
    </recommendedName>
    <alternativeName>
        <fullName evidence="1">10 kDa chaperonin</fullName>
    </alternativeName>
    <alternativeName>
        <fullName evidence="1">Chaperonin-10</fullName>
        <shortName evidence="1">Cpn10</shortName>
    </alternativeName>
</protein>
<name>CH10_BACFR</name>
<keyword id="KW-0143">Chaperone</keyword>
<keyword id="KW-0963">Cytoplasm</keyword>
<dbReference type="EMBL" id="AP006841">
    <property type="protein sequence ID" value="BAD50140.1"/>
    <property type="molecule type" value="Genomic_DNA"/>
</dbReference>
<dbReference type="RefSeq" id="WP_005789740.1">
    <property type="nucleotide sequence ID" value="NZ_UYXF01000026.1"/>
</dbReference>
<dbReference type="RefSeq" id="YP_100674.1">
    <property type="nucleotide sequence ID" value="NC_006347.1"/>
</dbReference>
<dbReference type="SMR" id="Q64QU1"/>
<dbReference type="STRING" id="295405.BF3396"/>
<dbReference type="KEGG" id="bfr:BF3396"/>
<dbReference type="PATRIC" id="fig|295405.11.peg.3264"/>
<dbReference type="HOGENOM" id="CLU_132825_2_3_10"/>
<dbReference type="OrthoDB" id="9806791at2"/>
<dbReference type="Proteomes" id="UP000002197">
    <property type="component" value="Chromosome"/>
</dbReference>
<dbReference type="GO" id="GO:0005737">
    <property type="term" value="C:cytoplasm"/>
    <property type="evidence" value="ECO:0007669"/>
    <property type="project" value="UniProtKB-SubCell"/>
</dbReference>
<dbReference type="GO" id="GO:0005524">
    <property type="term" value="F:ATP binding"/>
    <property type="evidence" value="ECO:0007669"/>
    <property type="project" value="InterPro"/>
</dbReference>
<dbReference type="GO" id="GO:0046872">
    <property type="term" value="F:metal ion binding"/>
    <property type="evidence" value="ECO:0007669"/>
    <property type="project" value="TreeGrafter"/>
</dbReference>
<dbReference type="GO" id="GO:0044183">
    <property type="term" value="F:protein folding chaperone"/>
    <property type="evidence" value="ECO:0007669"/>
    <property type="project" value="InterPro"/>
</dbReference>
<dbReference type="GO" id="GO:0051087">
    <property type="term" value="F:protein-folding chaperone binding"/>
    <property type="evidence" value="ECO:0007669"/>
    <property type="project" value="TreeGrafter"/>
</dbReference>
<dbReference type="GO" id="GO:0051082">
    <property type="term" value="F:unfolded protein binding"/>
    <property type="evidence" value="ECO:0007669"/>
    <property type="project" value="TreeGrafter"/>
</dbReference>
<dbReference type="GO" id="GO:0051085">
    <property type="term" value="P:chaperone cofactor-dependent protein refolding"/>
    <property type="evidence" value="ECO:0007669"/>
    <property type="project" value="TreeGrafter"/>
</dbReference>
<dbReference type="CDD" id="cd00320">
    <property type="entry name" value="cpn10"/>
    <property type="match status" value="1"/>
</dbReference>
<dbReference type="FunFam" id="2.30.33.40:FF:000004">
    <property type="entry name" value="10 kDa chaperonin"/>
    <property type="match status" value="1"/>
</dbReference>
<dbReference type="Gene3D" id="2.30.33.40">
    <property type="entry name" value="GroES chaperonin"/>
    <property type="match status" value="1"/>
</dbReference>
<dbReference type="HAMAP" id="MF_00580">
    <property type="entry name" value="CH10"/>
    <property type="match status" value="1"/>
</dbReference>
<dbReference type="InterPro" id="IPR020818">
    <property type="entry name" value="Chaperonin_GroES"/>
</dbReference>
<dbReference type="InterPro" id="IPR037124">
    <property type="entry name" value="Chaperonin_GroES_sf"/>
</dbReference>
<dbReference type="InterPro" id="IPR011032">
    <property type="entry name" value="GroES-like_sf"/>
</dbReference>
<dbReference type="NCBIfam" id="NF001531">
    <property type="entry name" value="PRK00364.2-2"/>
    <property type="match status" value="1"/>
</dbReference>
<dbReference type="NCBIfam" id="NF001533">
    <property type="entry name" value="PRK00364.2-4"/>
    <property type="match status" value="1"/>
</dbReference>
<dbReference type="PANTHER" id="PTHR10772">
    <property type="entry name" value="10 KDA HEAT SHOCK PROTEIN"/>
    <property type="match status" value="1"/>
</dbReference>
<dbReference type="PANTHER" id="PTHR10772:SF58">
    <property type="entry name" value="CO-CHAPERONIN GROES"/>
    <property type="match status" value="1"/>
</dbReference>
<dbReference type="Pfam" id="PF00166">
    <property type="entry name" value="Cpn10"/>
    <property type="match status" value="1"/>
</dbReference>
<dbReference type="PRINTS" id="PR00297">
    <property type="entry name" value="CHAPERONIN10"/>
</dbReference>
<dbReference type="SMART" id="SM00883">
    <property type="entry name" value="Cpn10"/>
    <property type="match status" value="1"/>
</dbReference>
<dbReference type="SUPFAM" id="SSF50129">
    <property type="entry name" value="GroES-like"/>
    <property type="match status" value="1"/>
</dbReference>
<accession>Q64QU1</accession>
<sequence length="90" mass="9618">MNIKPLADRVLILPAPAEEKTIGGIIIPDTAKEKPLKGEVVAVGHGTKDEEMVLKAGDTVLYGKYAGTELEVEGTKYLIMRQSDVLAVLG</sequence>
<feature type="chain" id="PRO_0000174692" description="Co-chaperonin GroES">
    <location>
        <begin position="1"/>
        <end position="90"/>
    </location>
</feature>